<feature type="transit peptide" description="Chloroplast" evidence="2">
    <location>
        <begin position="1"/>
        <end position="73"/>
    </location>
</feature>
<feature type="chain" id="PRO_0000415711" description="Outer envelope pore protein 37, chloroplastic">
    <location>
        <begin position="74"/>
        <end position="343"/>
    </location>
</feature>
<feature type="topological domain" description="Cytoplasmic">
    <location>
        <begin position="74"/>
        <end position="76"/>
    </location>
</feature>
<feature type="transmembrane region" description="Beta stranded; Name=1" evidence="2">
    <location>
        <begin position="77"/>
        <end position="86"/>
    </location>
</feature>
<feature type="topological domain" description="Chloroplast intermembrane">
    <location>
        <begin position="87"/>
        <end position="103"/>
    </location>
</feature>
<feature type="transmembrane region" description="Beta stranded; Name=2" evidence="2">
    <location>
        <begin position="104"/>
        <end position="113"/>
    </location>
</feature>
<feature type="topological domain" description="Cytoplasmic">
    <location>
        <begin position="114"/>
        <end position="129"/>
    </location>
</feature>
<feature type="transmembrane region" description="Beta stranded; Name=3" evidence="2">
    <location>
        <begin position="130"/>
        <end position="137"/>
    </location>
</feature>
<feature type="topological domain" description="Chloroplast intermembrane">
    <location>
        <begin position="138"/>
        <end position="154"/>
    </location>
</feature>
<feature type="transmembrane region" description="Beta stranded; Name=4" evidence="2">
    <location>
        <begin position="155"/>
        <end position="164"/>
    </location>
</feature>
<feature type="topological domain" description="Cytoplasmic">
    <location>
        <begin position="165"/>
        <end position="169"/>
    </location>
</feature>
<feature type="transmembrane region" description="Beta stranded; Name=5" evidence="2">
    <location>
        <begin position="170"/>
        <end position="178"/>
    </location>
</feature>
<feature type="topological domain" description="Chloroplast intermembrane">
    <location>
        <begin position="179"/>
        <end position="219"/>
    </location>
</feature>
<feature type="transmembrane region" description="Beta stranded; Name=6" evidence="2">
    <location>
        <begin position="220"/>
        <end position="228"/>
    </location>
</feature>
<feature type="topological domain" description="Cytoplasmic">
    <location>
        <begin position="229"/>
        <end position="230"/>
    </location>
</feature>
<feature type="transmembrane region" description="Beta stranded; Name=7" evidence="2">
    <location>
        <begin position="231"/>
        <end position="240"/>
    </location>
</feature>
<feature type="topological domain" description="Chloroplast intermembrane">
    <location>
        <position position="241"/>
    </location>
</feature>
<feature type="transmembrane region" description="Beta stranded; Name=8" evidence="2">
    <location>
        <begin position="242"/>
        <end position="250"/>
    </location>
</feature>
<feature type="topological domain" description="Cytoplasmic">
    <location>
        <begin position="251"/>
        <end position="257"/>
    </location>
</feature>
<feature type="transmembrane region" description="Beta stranded; Name=9" evidence="2">
    <location>
        <begin position="258"/>
        <end position="267"/>
    </location>
</feature>
<feature type="topological domain" description="Chloroplast intermembrane">
    <location>
        <begin position="268"/>
        <end position="269"/>
    </location>
</feature>
<feature type="transmembrane region" description="Beta stranded; Name=10" evidence="2">
    <location>
        <begin position="270"/>
        <end position="279"/>
    </location>
</feature>
<feature type="topological domain" description="Cytoplasmic">
    <location>
        <begin position="280"/>
        <end position="286"/>
    </location>
</feature>
<feature type="transmembrane region" description="Beta stranded; Name=11" evidence="2">
    <location>
        <begin position="287"/>
        <end position="296"/>
    </location>
</feature>
<feature type="topological domain" description="Chloroplast intermembrane">
    <location>
        <begin position="297"/>
        <end position="316"/>
    </location>
</feature>
<feature type="transmembrane region" description="Beta stranded; Name=12" evidence="2">
    <location>
        <begin position="317"/>
        <end position="326"/>
    </location>
</feature>
<feature type="topological domain" description="Cytoplasmic">
    <location>
        <begin position="327"/>
        <end position="343"/>
    </location>
</feature>
<feature type="region of interest" description="Disordered" evidence="3">
    <location>
        <begin position="1"/>
        <end position="43"/>
    </location>
</feature>
<feature type="compositionally biased region" description="Polar residues" evidence="3">
    <location>
        <begin position="1"/>
        <end position="11"/>
    </location>
</feature>
<feature type="compositionally biased region" description="Polar residues" evidence="3">
    <location>
        <begin position="23"/>
        <end position="43"/>
    </location>
</feature>
<feature type="splice variant" id="VSP_042323" description="In isoform 2." evidence="5">
    <original>GDEAGKVKTTPMKMKVQFMLQVPQDDIKSSVLMFRVKKRWDI</original>
    <variation>NHQPLVFFSLFSHQRNLFTRLSPNPSHTSKML</variation>
    <location>
        <begin position="302"/>
        <end position="343"/>
    </location>
</feature>
<name>OEP37_ARATH</name>
<organism>
    <name type="scientific">Arabidopsis thaliana</name>
    <name type="common">Mouse-ear cress</name>
    <dbReference type="NCBI Taxonomy" id="3702"/>
    <lineage>
        <taxon>Eukaryota</taxon>
        <taxon>Viridiplantae</taxon>
        <taxon>Streptophyta</taxon>
        <taxon>Embryophyta</taxon>
        <taxon>Tracheophyta</taxon>
        <taxon>Spermatophyta</taxon>
        <taxon>Magnoliopsida</taxon>
        <taxon>eudicotyledons</taxon>
        <taxon>Gunneridae</taxon>
        <taxon>Pentapetalae</taxon>
        <taxon>rosids</taxon>
        <taxon>malvids</taxon>
        <taxon>Brassicales</taxon>
        <taxon>Brassicaceae</taxon>
        <taxon>Camelineae</taxon>
        <taxon>Arabidopsis</taxon>
    </lineage>
</organism>
<dbReference type="EMBL" id="AC004005">
    <property type="protein sequence ID" value="AAC23403.2"/>
    <property type="molecule type" value="Genomic_DNA"/>
</dbReference>
<dbReference type="EMBL" id="CP002685">
    <property type="protein sequence ID" value="AEC10352.1"/>
    <property type="molecule type" value="Genomic_DNA"/>
</dbReference>
<dbReference type="EMBL" id="CP002685">
    <property type="protein sequence ID" value="AEC10354.1"/>
    <property type="molecule type" value="Genomic_DNA"/>
</dbReference>
<dbReference type="EMBL" id="AY045937">
    <property type="protein sequence ID" value="AAK76611.1"/>
    <property type="molecule type" value="mRNA"/>
</dbReference>
<dbReference type="EMBL" id="AY079409">
    <property type="protein sequence ID" value="AAL85140.1"/>
    <property type="molecule type" value="mRNA"/>
</dbReference>
<dbReference type="PIR" id="T00675">
    <property type="entry name" value="T00675"/>
</dbReference>
<dbReference type="RefSeq" id="NP_566003.1">
    <molecule id="O80565-1"/>
    <property type="nucleotide sequence ID" value="NM_129957.4"/>
</dbReference>
<dbReference type="RefSeq" id="NP_850405.2">
    <molecule id="O80565-2"/>
    <property type="nucleotide sequence ID" value="NM_180074.3"/>
</dbReference>
<dbReference type="BioGRID" id="4336">
    <property type="interactions" value="1"/>
</dbReference>
<dbReference type="FunCoup" id="O80565">
    <property type="interactions" value="2707"/>
</dbReference>
<dbReference type="IntAct" id="O80565">
    <property type="interactions" value="2"/>
</dbReference>
<dbReference type="STRING" id="3702.O80565"/>
<dbReference type="TCDB" id="1.B.47.1.2">
    <property type="family name" value="the plastid outer envelope porin of 37 kda (oep37) family"/>
</dbReference>
<dbReference type="GlyGen" id="O80565">
    <property type="glycosylation" value="1 site"/>
</dbReference>
<dbReference type="SwissPalm" id="O80565"/>
<dbReference type="PaxDb" id="3702-AT2G43950.1"/>
<dbReference type="ProteomicsDB" id="239017">
    <molecule id="O80565-1"/>
</dbReference>
<dbReference type="EnsemblPlants" id="AT2G43950.1">
    <molecule id="O80565-1"/>
    <property type="protein sequence ID" value="AT2G43950.1"/>
    <property type="gene ID" value="AT2G43950"/>
</dbReference>
<dbReference type="EnsemblPlants" id="AT2G43950.2">
    <molecule id="O80565-2"/>
    <property type="protein sequence ID" value="AT2G43950.2"/>
    <property type="gene ID" value="AT2G43950"/>
</dbReference>
<dbReference type="GeneID" id="819000"/>
<dbReference type="Gramene" id="AT2G43950.1">
    <molecule id="O80565-1"/>
    <property type="protein sequence ID" value="AT2G43950.1"/>
    <property type="gene ID" value="AT2G43950"/>
</dbReference>
<dbReference type="Gramene" id="AT2G43950.2">
    <molecule id="O80565-2"/>
    <property type="protein sequence ID" value="AT2G43950.2"/>
    <property type="gene ID" value="AT2G43950"/>
</dbReference>
<dbReference type="KEGG" id="ath:AT2G43950"/>
<dbReference type="Araport" id="AT2G43950"/>
<dbReference type="TAIR" id="AT2G43950">
    <property type="gene designation" value="OEP37"/>
</dbReference>
<dbReference type="eggNOG" id="ENOG502QQCE">
    <property type="taxonomic scope" value="Eukaryota"/>
</dbReference>
<dbReference type="HOGENOM" id="CLU_069482_0_0_1"/>
<dbReference type="InParanoid" id="O80565"/>
<dbReference type="OMA" id="FRIKKRW"/>
<dbReference type="PhylomeDB" id="O80565"/>
<dbReference type="PRO" id="PR:O80565"/>
<dbReference type="Proteomes" id="UP000006548">
    <property type="component" value="Chromosome 2"/>
</dbReference>
<dbReference type="ExpressionAtlas" id="O80565">
    <property type="expression patterns" value="baseline and differential"/>
</dbReference>
<dbReference type="GO" id="GO:0009507">
    <property type="term" value="C:chloroplast"/>
    <property type="evidence" value="ECO:0000314"/>
    <property type="project" value="TAIR"/>
</dbReference>
<dbReference type="GO" id="GO:0009941">
    <property type="term" value="C:chloroplast envelope"/>
    <property type="evidence" value="ECO:0007005"/>
    <property type="project" value="TAIR"/>
</dbReference>
<dbReference type="GO" id="GO:0009706">
    <property type="term" value="C:chloroplast inner membrane"/>
    <property type="evidence" value="ECO:0000314"/>
    <property type="project" value="TAIR"/>
</dbReference>
<dbReference type="GO" id="GO:0009707">
    <property type="term" value="C:chloroplast outer membrane"/>
    <property type="evidence" value="ECO:0000314"/>
    <property type="project" value="UniProtKB"/>
</dbReference>
<dbReference type="GO" id="GO:0005829">
    <property type="term" value="C:cytosol"/>
    <property type="evidence" value="ECO:0007005"/>
    <property type="project" value="TAIR"/>
</dbReference>
<dbReference type="GO" id="GO:0009536">
    <property type="term" value="C:plastid"/>
    <property type="evidence" value="ECO:0007005"/>
    <property type="project" value="TAIR"/>
</dbReference>
<dbReference type="GO" id="GO:0046930">
    <property type="term" value="C:pore complex"/>
    <property type="evidence" value="ECO:0007669"/>
    <property type="project" value="UniProtKB-KW"/>
</dbReference>
<dbReference type="GO" id="GO:0042802">
    <property type="term" value="F:identical protein binding"/>
    <property type="evidence" value="ECO:0000250"/>
    <property type="project" value="UniProtKB"/>
</dbReference>
<dbReference type="GO" id="GO:0005216">
    <property type="term" value="F:monoatomic ion channel activity"/>
    <property type="evidence" value="ECO:0000314"/>
    <property type="project" value="TAIR"/>
</dbReference>
<dbReference type="GO" id="GO:0015288">
    <property type="term" value="F:porin activity"/>
    <property type="evidence" value="ECO:0007669"/>
    <property type="project" value="UniProtKB-KW"/>
</dbReference>
<dbReference type="GO" id="GO:0006812">
    <property type="term" value="P:monoatomic cation transport"/>
    <property type="evidence" value="ECO:0000314"/>
    <property type="project" value="TAIR"/>
</dbReference>
<dbReference type="InterPro" id="IPR038951">
    <property type="entry name" value="OEP37-like"/>
</dbReference>
<dbReference type="PANTHER" id="PTHR35484">
    <property type="entry name" value="OUTER ENVELOPE PORE PROTEIN 37, CHLOROPLASTIC"/>
    <property type="match status" value="1"/>
</dbReference>
<dbReference type="PANTHER" id="PTHR35484:SF2">
    <property type="entry name" value="OUTER ENVELOPE PORE PROTEIN 37, CHLOROPLASTIC"/>
    <property type="match status" value="1"/>
</dbReference>
<comment type="function">
    <text evidence="4">Voltage-dependent peptide-sensitive high conductance rectifying cation channel with a strong affinity for TIC32 that is imported into the chloroplast. Conductance is pH-dependent decreasing with decreasing pH values.</text>
</comment>
<comment type="subunit">
    <text evidence="1">Forms an hourglass-shaped multimeric complex.</text>
</comment>
<comment type="subcellular location">
    <subcellularLocation>
        <location evidence="4">Plastid</location>
        <location evidence="4">Chloroplast outer membrane</location>
        <topology evidence="4">Multi-pass membrane protein</topology>
    </subcellularLocation>
</comment>
<comment type="alternative products">
    <event type="alternative splicing"/>
    <isoform>
        <id>O80565-1</id>
        <name>1</name>
        <sequence type="displayed"/>
    </isoform>
    <isoform>
        <id>O80565-2</id>
        <name>2</name>
        <sequence type="described" ref="VSP_042323"/>
    </isoform>
</comment>
<comment type="tissue specificity">
    <text evidence="4">Ubiquitously expressed at low levels. Mostly present in cotyledons, and accumulates in seedlings and embryos.</text>
</comment>
<comment type="developmental stage">
    <text evidence="4">During seed development, confined to green cotyledons of mature embryos. In germinating seedlings, detected in cotyledons and the root hair zone of the primary root. In older seedlings, restricted to cotyledons.</text>
</comment>
<comment type="similarity">
    <text evidence="5">Belongs to the plastid outer envelope porin OEP37 (TC 1.B.47) family.</text>
</comment>
<sequence>MADPSSQNPNLATPPPPSSPSPTHQIQSGTSELSPPSRPPCSTLSFLKTANRPKLRVTSEFDSDSLLFLNKVSCKLFDNLAKLKLSFQNNSQREISQPQVSFTSKHVSVLYDVEEKNTFIKSTLDVHPRLQLRALHNVKAQQGEVAMEANLTEPGYSLELSSPVPIGYPRATLKFPLGEISLQEKDEEEEEKQKRTLSVNGILKRQVMNGVCTALYTDEELRLRYAYKDDALSFIPSISLPSNAASFAFKRRFSPSDKLSYWYNFDSNMWSAVYKRTYGKDYKLKAGYDSDVRLGWASLWVGDEAGKVKTTPMKMKVQFMLQVPQDDIKSSVLMFRVKKRWDI</sequence>
<accession>O80565</accession>
<accession>F4IT23</accession>
<accession>F4IT24</accession>
<accession>Q94AM0</accession>
<evidence type="ECO:0000250" key="1"/>
<evidence type="ECO:0000255" key="2"/>
<evidence type="ECO:0000256" key="3">
    <source>
        <dbReference type="SAM" id="MobiDB-lite"/>
    </source>
</evidence>
<evidence type="ECO:0000269" key="4">
    <source>
    </source>
</evidence>
<evidence type="ECO:0000305" key="5"/>
<proteinExistence type="evidence at transcript level"/>
<reference key="1">
    <citation type="journal article" date="1999" name="Nature">
        <title>Sequence and analysis of chromosome 2 of the plant Arabidopsis thaliana.</title>
        <authorList>
            <person name="Lin X."/>
            <person name="Kaul S."/>
            <person name="Rounsley S.D."/>
            <person name="Shea T.P."/>
            <person name="Benito M.-I."/>
            <person name="Town C.D."/>
            <person name="Fujii C.Y."/>
            <person name="Mason T.M."/>
            <person name="Bowman C.L."/>
            <person name="Barnstead M.E."/>
            <person name="Feldblyum T.V."/>
            <person name="Buell C.R."/>
            <person name="Ketchum K.A."/>
            <person name="Lee J.J."/>
            <person name="Ronning C.M."/>
            <person name="Koo H.L."/>
            <person name="Moffat K.S."/>
            <person name="Cronin L.A."/>
            <person name="Shen M."/>
            <person name="Pai G."/>
            <person name="Van Aken S."/>
            <person name="Umayam L."/>
            <person name="Tallon L.J."/>
            <person name="Gill J.E."/>
            <person name="Adams M.D."/>
            <person name="Carrera A.J."/>
            <person name="Creasy T.H."/>
            <person name="Goodman H.M."/>
            <person name="Somerville C.R."/>
            <person name="Copenhaver G.P."/>
            <person name="Preuss D."/>
            <person name="Nierman W.C."/>
            <person name="White O."/>
            <person name="Eisen J.A."/>
            <person name="Salzberg S.L."/>
            <person name="Fraser C.M."/>
            <person name="Venter J.C."/>
        </authorList>
    </citation>
    <scope>NUCLEOTIDE SEQUENCE [LARGE SCALE GENOMIC DNA]</scope>
    <source>
        <strain>cv. Columbia</strain>
    </source>
</reference>
<reference key="2">
    <citation type="journal article" date="2017" name="Plant J.">
        <title>Araport11: a complete reannotation of the Arabidopsis thaliana reference genome.</title>
        <authorList>
            <person name="Cheng C.Y."/>
            <person name="Krishnakumar V."/>
            <person name="Chan A.P."/>
            <person name="Thibaud-Nissen F."/>
            <person name="Schobel S."/>
            <person name="Town C.D."/>
        </authorList>
    </citation>
    <scope>GENOME REANNOTATION</scope>
    <source>
        <strain>cv. Columbia</strain>
    </source>
</reference>
<reference key="3">
    <citation type="journal article" date="2003" name="Science">
        <title>Empirical analysis of transcriptional activity in the Arabidopsis genome.</title>
        <authorList>
            <person name="Yamada K."/>
            <person name="Lim J."/>
            <person name="Dale J.M."/>
            <person name="Chen H."/>
            <person name="Shinn P."/>
            <person name="Palm C.J."/>
            <person name="Southwick A.M."/>
            <person name="Wu H.C."/>
            <person name="Kim C.J."/>
            <person name="Nguyen M."/>
            <person name="Pham P.K."/>
            <person name="Cheuk R.F."/>
            <person name="Karlin-Newmann G."/>
            <person name="Liu S.X."/>
            <person name="Lam B."/>
            <person name="Sakano H."/>
            <person name="Wu T."/>
            <person name="Yu G."/>
            <person name="Miranda M."/>
            <person name="Quach H.L."/>
            <person name="Tripp M."/>
            <person name="Chang C.H."/>
            <person name="Lee J.M."/>
            <person name="Toriumi M.J."/>
            <person name="Chan M.M."/>
            <person name="Tang C.C."/>
            <person name="Onodera C.S."/>
            <person name="Deng J.M."/>
            <person name="Akiyama K."/>
            <person name="Ansari Y."/>
            <person name="Arakawa T."/>
            <person name="Banh J."/>
            <person name="Banno F."/>
            <person name="Bowser L."/>
            <person name="Brooks S.Y."/>
            <person name="Carninci P."/>
            <person name="Chao Q."/>
            <person name="Choy N."/>
            <person name="Enju A."/>
            <person name="Goldsmith A.D."/>
            <person name="Gurjal M."/>
            <person name="Hansen N.F."/>
            <person name="Hayashizaki Y."/>
            <person name="Johnson-Hopson C."/>
            <person name="Hsuan V.W."/>
            <person name="Iida K."/>
            <person name="Karnes M."/>
            <person name="Khan S."/>
            <person name="Koesema E."/>
            <person name="Ishida J."/>
            <person name="Jiang P.X."/>
            <person name="Jones T."/>
            <person name="Kawai J."/>
            <person name="Kamiya A."/>
            <person name="Meyers C."/>
            <person name="Nakajima M."/>
            <person name="Narusaka M."/>
            <person name="Seki M."/>
            <person name="Sakurai T."/>
            <person name="Satou M."/>
            <person name="Tamse R."/>
            <person name="Vaysberg M."/>
            <person name="Wallender E.K."/>
            <person name="Wong C."/>
            <person name="Yamamura Y."/>
            <person name="Yuan S."/>
            <person name="Shinozaki K."/>
            <person name="Davis R.W."/>
            <person name="Theologis A."/>
            <person name="Ecker J.R."/>
        </authorList>
    </citation>
    <scope>NUCLEOTIDE SEQUENCE [LARGE SCALE MRNA] (ISOFORM 1)</scope>
    <source>
        <strain>cv. Columbia</strain>
    </source>
</reference>
<reference key="4">
    <citation type="journal article" date="2003" name="Protein Sci.">
        <title>Prediction of the plant beta-barrel proteome: a case study of the chloroplast outer envelope.</title>
        <authorList>
            <person name="Schleiff E."/>
            <person name="Eichacker L.A."/>
            <person name="Eckart K."/>
            <person name="Becker T."/>
            <person name="Mirus O."/>
            <person name="Stahl T."/>
            <person name="Soll J."/>
        </authorList>
    </citation>
    <scope>GENE FAMILY</scope>
</reference>
<reference key="5">
    <citation type="journal article" date="2006" name="J. Biol. Chem.">
        <title>OEP37 is a new member of the chloroplast outer membrane ion channels.</title>
        <authorList>
            <person name="Goetze T.A."/>
            <person name="Philippar K."/>
            <person name="Ilkavets I."/>
            <person name="Soll J."/>
            <person name="Wagner R."/>
        </authorList>
    </citation>
    <scope>FUNCTION</scope>
    <scope>TISSUE SPECIFICITY</scope>
    <scope>DEVELOPMENTAL STAGE</scope>
    <scope>SUBCELLULAR LOCATION</scope>
    <source>
        <strain>cv. Columbia</strain>
    </source>
</reference>
<protein>
    <recommendedName>
        <fullName>Outer envelope pore protein 37, chloroplastic</fullName>
    </recommendedName>
    <alternativeName>
        <fullName>Chloroplastic outer envelope pore protein of 37 kDa</fullName>
        <shortName>AtOEP37</shortName>
    </alternativeName>
</protein>
<keyword id="KW-0025">Alternative splicing</keyword>
<keyword id="KW-0150">Chloroplast</keyword>
<keyword id="KW-0406">Ion transport</keyword>
<keyword id="KW-0472">Membrane</keyword>
<keyword id="KW-0934">Plastid</keyword>
<keyword id="KW-1002">Plastid outer membrane</keyword>
<keyword id="KW-0626">Porin</keyword>
<keyword id="KW-1185">Reference proteome</keyword>
<keyword id="KW-0809">Transit peptide</keyword>
<keyword id="KW-0812">Transmembrane</keyword>
<keyword id="KW-1134">Transmembrane beta strand</keyword>
<keyword id="KW-0813">Transport</keyword>
<gene>
    <name type="primary">OEP37</name>
    <name type="ordered locus">At2g43950</name>
    <name type="ORF">F6E13.8</name>
</gene>